<sequence>MLKDTIKSGDWKGEKHVPVIEYEKEGDLVKVEVSVGKEIPHPNTPEHHIAWIELYFHPEDGQFPILVGRVAFTSHDDPLTEPRAVFFFKTKKKGKLYALSYCNIHGLWENEVQLE</sequence>
<organism>
    <name type="scientific">Pyrococcus abyssi (strain GE5 / Orsay)</name>
    <dbReference type="NCBI Taxonomy" id="272844"/>
    <lineage>
        <taxon>Archaea</taxon>
        <taxon>Methanobacteriati</taxon>
        <taxon>Methanobacteriota</taxon>
        <taxon>Thermococci</taxon>
        <taxon>Thermococcales</taxon>
        <taxon>Thermococcaceae</taxon>
        <taxon>Pyrococcus</taxon>
    </lineage>
</organism>
<reference key="1">
    <citation type="journal article" date="2003" name="Mol. Microbiol.">
        <title>An integrated analysis of the genome of the hyperthermophilic archaeon Pyrococcus abyssi.</title>
        <authorList>
            <person name="Cohen G.N."/>
            <person name="Barbe V."/>
            <person name="Flament D."/>
            <person name="Galperin M."/>
            <person name="Heilig R."/>
            <person name="Lecompte O."/>
            <person name="Poch O."/>
            <person name="Prieur D."/>
            <person name="Querellou J."/>
            <person name="Ripp R."/>
            <person name="Thierry J.-C."/>
            <person name="Van der Oost J."/>
            <person name="Weissenbach J."/>
            <person name="Zivanovic Y."/>
            <person name="Forterre P."/>
        </authorList>
    </citation>
    <scope>NUCLEOTIDE SEQUENCE [LARGE SCALE GENOMIC DNA]</scope>
    <source>
        <strain>GE5 / Orsay</strain>
    </source>
</reference>
<reference key="2">
    <citation type="journal article" date="2012" name="Curr. Microbiol.">
        <title>Re-annotation of two hyperthermophilic archaea Pyrococcus abyssi GE5 and Pyrococcus furiosus DSM 3638.</title>
        <authorList>
            <person name="Gao J."/>
            <person name="Wang J."/>
        </authorList>
    </citation>
    <scope>GENOME REANNOTATION</scope>
    <source>
        <strain>GE5 / Orsay</strain>
    </source>
</reference>
<comment type="function">
    <text evidence="1">Uses electrons from reduced NADP, by way of rubredoxin and an oxidoreductase, to catalyze the reduction of superoxide to hydrogen peroxide.</text>
</comment>
<comment type="catalytic activity">
    <reaction evidence="2">
        <text>reduced [rubredoxin] + superoxide + 2 H(+) = oxidized [rubredoxin] + H2O2</text>
        <dbReference type="Rhea" id="RHEA:21324"/>
        <dbReference type="Rhea" id="RHEA-COMP:10302"/>
        <dbReference type="Rhea" id="RHEA-COMP:10303"/>
        <dbReference type="ChEBI" id="CHEBI:15378"/>
        <dbReference type="ChEBI" id="CHEBI:16240"/>
        <dbReference type="ChEBI" id="CHEBI:18421"/>
        <dbReference type="ChEBI" id="CHEBI:29033"/>
        <dbReference type="ChEBI" id="CHEBI:29034"/>
        <dbReference type="EC" id="1.15.1.2"/>
    </reaction>
</comment>
<comment type="cofactor">
    <cofactor evidence="1">
        <name>Fe cation</name>
        <dbReference type="ChEBI" id="CHEBI:24875"/>
    </cofactor>
</comment>
<comment type="subunit">
    <text evidence="1">Homotetramer.</text>
</comment>
<comment type="similarity">
    <text evidence="3">Belongs to the desulfoferrodoxin family.</text>
</comment>
<comment type="sequence caution" evidence="3">
    <conflict type="erroneous initiation">
        <sequence resource="EMBL-CDS" id="CAB49807"/>
    </conflict>
    <text>Extended N-terminus.</text>
</comment>
<comment type="sequence caution" evidence="3">
    <conflict type="erroneous initiation">
        <sequence resource="EMBL-CDS" id="CCE70300"/>
    </conflict>
    <text>Extended N-terminus.</text>
</comment>
<keyword id="KW-0249">Electron transport</keyword>
<keyword id="KW-0408">Iron</keyword>
<keyword id="KW-0479">Metal-binding</keyword>
<keyword id="KW-0560">Oxidoreductase</keyword>
<keyword id="KW-0813">Transport</keyword>
<name>SOR_PYRAB</name>
<dbReference type="EC" id="1.15.1.2"/>
<dbReference type="EMBL" id="AJ248285">
    <property type="protein sequence ID" value="CAB49807.1"/>
    <property type="status" value="ALT_INIT"/>
    <property type="molecule type" value="Genomic_DNA"/>
</dbReference>
<dbReference type="EMBL" id="HE613800">
    <property type="protein sequence ID" value="CCE70300.1"/>
    <property type="status" value="ALT_INIT"/>
    <property type="molecule type" value="Genomic_DNA"/>
</dbReference>
<dbReference type="PIR" id="F75136">
    <property type="entry name" value="F75136"/>
</dbReference>
<dbReference type="RefSeq" id="WP_048146718.1">
    <property type="nucleotide sequence ID" value="NC_000868.1"/>
</dbReference>
<dbReference type="SMR" id="Q9V098"/>
<dbReference type="STRING" id="272844.PAB0599"/>
<dbReference type="KEGG" id="pab:PAB0599"/>
<dbReference type="PATRIC" id="fig|272844.11.peg.945"/>
<dbReference type="eggNOG" id="arCOG02146">
    <property type="taxonomic scope" value="Archaea"/>
</dbReference>
<dbReference type="HOGENOM" id="CLU_118960_2_1_2"/>
<dbReference type="OrthoDB" id="30725at2157"/>
<dbReference type="PhylomeDB" id="Q9V098"/>
<dbReference type="Proteomes" id="UP000000810">
    <property type="component" value="Chromosome"/>
</dbReference>
<dbReference type="Proteomes" id="UP000009139">
    <property type="component" value="Chromosome"/>
</dbReference>
<dbReference type="GO" id="GO:0005506">
    <property type="term" value="F:iron ion binding"/>
    <property type="evidence" value="ECO:0007669"/>
    <property type="project" value="InterPro"/>
</dbReference>
<dbReference type="GO" id="GO:0050605">
    <property type="term" value="F:superoxide reductase activity"/>
    <property type="evidence" value="ECO:0007669"/>
    <property type="project" value="UniProtKB-EC"/>
</dbReference>
<dbReference type="CDD" id="cd03172">
    <property type="entry name" value="SORL_classII"/>
    <property type="match status" value="1"/>
</dbReference>
<dbReference type="Gene3D" id="2.60.40.730">
    <property type="entry name" value="SOR catalytic domain"/>
    <property type="match status" value="1"/>
</dbReference>
<dbReference type="InterPro" id="IPR002742">
    <property type="entry name" value="Desulfoferrodoxin_Fe-bd_dom"/>
</dbReference>
<dbReference type="InterPro" id="IPR036073">
    <property type="entry name" value="Desulfoferrodoxin_Fe-bd_dom_sf"/>
</dbReference>
<dbReference type="InterPro" id="IPR051233">
    <property type="entry name" value="Desulfoferrodoxin_SOR"/>
</dbReference>
<dbReference type="NCBIfam" id="TIGR00332">
    <property type="entry name" value="neela_ferrous"/>
    <property type="match status" value="1"/>
</dbReference>
<dbReference type="PANTHER" id="PTHR36541">
    <property type="entry name" value="SUPEROXIDE REDUCTASE-RELATED"/>
    <property type="match status" value="1"/>
</dbReference>
<dbReference type="PANTHER" id="PTHR36541:SF1">
    <property type="entry name" value="SUPEROXIDE REDUCTASE-RELATED"/>
    <property type="match status" value="1"/>
</dbReference>
<dbReference type="Pfam" id="PF01880">
    <property type="entry name" value="Desulfoferrodox"/>
    <property type="match status" value="1"/>
</dbReference>
<dbReference type="SUPFAM" id="SSF49367">
    <property type="entry name" value="Superoxide reductase-like"/>
    <property type="match status" value="1"/>
</dbReference>
<accession>Q9V098</accession>
<accession>G8ZI59</accession>
<feature type="chain" id="PRO_0000140872" description="Superoxide reductase">
    <location>
        <begin position="1"/>
        <end position="115"/>
    </location>
</feature>
<feature type="binding site" evidence="1">
    <location>
        <position position="14"/>
    </location>
    <ligand>
        <name>Fe cation</name>
        <dbReference type="ChEBI" id="CHEBI:24875"/>
    </ligand>
</feature>
<feature type="binding site" evidence="1">
    <location>
        <position position="16"/>
    </location>
    <ligand>
        <name>Fe cation</name>
        <dbReference type="ChEBI" id="CHEBI:24875"/>
    </ligand>
</feature>
<feature type="binding site" evidence="1">
    <location>
        <position position="41"/>
    </location>
    <ligand>
        <name>Fe cation</name>
        <dbReference type="ChEBI" id="CHEBI:24875"/>
    </ligand>
</feature>
<feature type="binding site" evidence="1">
    <location>
        <position position="47"/>
    </location>
    <ligand>
        <name>Fe cation</name>
        <dbReference type="ChEBI" id="CHEBI:24875"/>
    </ligand>
</feature>
<feature type="binding site" evidence="1">
    <location>
        <position position="102"/>
    </location>
    <ligand>
        <name>Fe cation</name>
        <dbReference type="ChEBI" id="CHEBI:24875"/>
    </ligand>
</feature>
<feature type="binding site" evidence="1">
    <location>
        <position position="105"/>
    </location>
    <ligand>
        <name>Fe cation</name>
        <dbReference type="ChEBI" id="CHEBI:24875"/>
    </ligand>
</feature>
<gene>
    <name type="primary">sorA</name>
    <name type="ordered locus">PYRAB08930</name>
    <name type="ORF">PAB0599</name>
</gene>
<evidence type="ECO:0000250" key="1"/>
<evidence type="ECO:0000250" key="2">
    <source>
        <dbReference type="UniProtKB" id="P82385"/>
    </source>
</evidence>
<evidence type="ECO:0000305" key="3"/>
<protein>
    <recommendedName>
        <fullName>Superoxide reductase</fullName>
        <shortName>SOR</shortName>
        <ecNumber>1.15.1.2</ecNumber>
    </recommendedName>
</protein>
<proteinExistence type="inferred from homology"/>